<accession>A4WE04</accession>
<evidence type="ECO:0000255" key="1">
    <source>
        <dbReference type="HAMAP-Rule" id="MF_01147"/>
    </source>
</evidence>
<comment type="function">
    <text evidence="1">Catalyzes the transfer of the diacylglyceryl group from phosphatidylglycerol to the sulfhydryl group of the N-terminal cysteine of a prolipoprotein, the first step in the formation of mature lipoproteins.</text>
</comment>
<comment type="catalytic activity">
    <reaction evidence="1">
        <text>L-cysteinyl-[prolipoprotein] + a 1,2-diacyl-sn-glycero-3-phospho-(1'-sn-glycerol) = an S-1,2-diacyl-sn-glyceryl-L-cysteinyl-[prolipoprotein] + sn-glycerol 1-phosphate + H(+)</text>
        <dbReference type="Rhea" id="RHEA:56712"/>
        <dbReference type="Rhea" id="RHEA-COMP:14679"/>
        <dbReference type="Rhea" id="RHEA-COMP:14680"/>
        <dbReference type="ChEBI" id="CHEBI:15378"/>
        <dbReference type="ChEBI" id="CHEBI:29950"/>
        <dbReference type="ChEBI" id="CHEBI:57685"/>
        <dbReference type="ChEBI" id="CHEBI:64716"/>
        <dbReference type="ChEBI" id="CHEBI:140658"/>
        <dbReference type="EC" id="2.5.1.145"/>
    </reaction>
</comment>
<comment type="pathway">
    <text evidence="1">Protein modification; lipoprotein biosynthesis (diacylglyceryl transfer).</text>
</comment>
<comment type="subcellular location">
    <subcellularLocation>
        <location evidence="1">Cell inner membrane</location>
        <topology evidence="1">Multi-pass membrane protein</topology>
    </subcellularLocation>
</comment>
<comment type="similarity">
    <text evidence="1">Belongs to the Lgt family.</text>
</comment>
<keyword id="KW-0997">Cell inner membrane</keyword>
<keyword id="KW-1003">Cell membrane</keyword>
<keyword id="KW-0472">Membrane</keyword>
<keyword id="KW-0808">Transferase</keyword>
<keyword id="KW-0812">Transmembrane</keyword>
<keyword id="KW-1133">Transmembrane helix</keyword>
<dbReference type="EC" id="2.5.1.145" evidence="1"/>
<dbReference type="EMBL" id="CP000653">
    <property type="protein sequence ID" value="ABP61934.1"/>
    <property type="molecule type" value="Genomic_DNA"/>
</dbReference>
<dbReference type="RefSeq" id="WP_015960263.1">
    <property type="nucleotide sequence ID" value="NC_009436.1"/>
</dbReference>
<dbReference type="SMR" id="A4WE04"/>
<dbReference type="STRING" id="399742.Ent638_3270"/>
<dbReference type="KEGG" id="ent:Ent638_3270"/>
<dbReference type="eggNOG" id="COG0682">
    <property type="taxonomic scope" value="Bacteria"/>
</dbReference>
<dbReference type="HOGENOM" id="CLU_013386_1_0_6"/>
<dbReference type="OrthoDB" id="871140at2"/>
<dbReference type="UniPathway" id="UPA00664"/>
<dbReference type="Proteomes" id="UP000000230">
    <property type="component" value="Chromosome"/>
</dbReference>
<dbReference type="GO" id="GO:0005886">
    <property type="term" value="C:plasma membrane"/>
    <property type="evidence" value="ECO:0007669"/>
    <property type="project" value="UniProtKB-SubCell"/>
</dbReference>
<dbReference type="GO" id="GO:0008961">
    <property type="term" value="F:phosphatidylglycerol-prolipoprotein diacylglyceryl transferase activity"/>
    <property type="evidence" value="ECO:0007669"/>
    <property type="project" value="UniProtKB-UniRule"/>
</dbReference>
<dbReference type="GO" id="GO:0042158">
    <property type="term" value="P:lipoprotein biosynthetic process"/>
    <property type="evidence" value="ECO:0007669"/>
    <property type="project" value="UniProtKB-UniRule"/>
</dbReference>
<dbReference type="HAMAP" id="MF_01147">
    <property type="entry name" value="Lgt"/>
    <property type="match status" value="1"/>
</dbReference>
<dbReference type="InterPro" id="IPR001640">
    <property type="entry name" value="Lgt"/>
</dbReference>
<dbReference type="NCBIfam" id="TIGR00544">
    <property type="entry name" value="lgt"/>
    <property type="match status" value="1"/>
</dbReference>
<dbReference type="PANTHER" id="PTHR30589:SF0">
    <property type="entry name" value="PHOSPHATIDYLGLYCEROL--PROLIPOPROTEIN DIACYLGLYCERYL TRANSFERASE"/>
    <property type="match status" value="1"/>
</dbReference>
<dbReference type="PANTHER" id="PTHR30589">
    <property type="entry name" value="PROLIPOPROTEIN DIACYLGLYCERYL TRANSFERASE"/>
    <property type="match status" value="1"/>
</dbReference>
<dbReference type="Pfam" id="PF01790">
    <property type="entry name" value="LGT"/>
    <property type="match status" value="1"/>
</dbReference>
<dbReference type="PROSITE" id="PS01311">
    <property type="entry name" value="LGT"/>
    <property type="match status" value="1"/>
</dbReference>
<protein>
    <recommendedName>
        <fullName evidence="1">Phosphatidylglycerol--prolipoprotein diacylglyceryl transferase</fullName>
        <ecNumber evidence="1">2.5.1.145</ecNumber>
    </recommendedName>
</protein>
<gene>
    <name evidence="1" type="primary">lgt</name>
    <name type="ordered locus">Ent638_3270</name>
</gene>
<reference key="1">
    <citation type="journal article" date="2010" name="PLoS Genet.">
        <title>Genome sequence of the plant growth promoting endophytic bacterium Enterobacter sp. 638.</title>
        <authorList>
            <person name="Taghavi S."/>
            <person name="van der Lelie D."/>
            <person name="Hoffman A."/>
            <person name="Zhang Y.B."/>
            <person name="Walla M.D."/>
            <person name="Vangronsveld J."/>
            <person name="Newman L."/>
            <person name="Monchy S."/>
        </authorList>
    </citation>
    <scope>NUCLEOTIDE SEQUENCE [LARGE SCALE GENOMIC DNA]</scope>
    <source>
        <strain>638</strain>
    </source>
</reference>
<proteinExistence type="inferred from homology"/>
<sequence>MNSGYLHFPEFDPVIFSIGPVALHWYGLMYLVGFIFAMWLAGRRAGRPGSGWTKNEVENLLYAGFLGVFLGGRIGYVLFYNFPTFLSDPLYLFRVWDGGMSFHGGLIGVILVMVIFAKRTKRNFFQVADFMAPLIPFGLGAGRLGNFINGELWGRVDPSVPYTMLFPASRAEDIALLPSHPEWQSIFDTYGVLPRHMSQLYELALEGVVLFIILNLFIRKPRPMGSVSGLFLIGYGAFRIIVEFFRQPDAQFTGEWVQYISMGQILSIPMIVAGIIMMIWAYRRPQQQLS</sequence>
<organism>
    <name type="scientific">Enterobacter sp. (strain 638)</name>
    <dbReference type="NCBI Taxonomy" id="399742"/>
    <lineage>
        <taxon>Bacteria</taxon>
        <taxon>Pseudomonadati</taxon>
        <taxon>Pseudomonadota</taxon>
        <taxon>Gammaproteobacteria</taxon>
        <taxon>Enterobacterales</taxon>
        <taxon>Enterobacteriaceae</taxon>
        <taxon>Enterobacter</taxon>
    </lineage>
</organism>
<feature type="chain" id="PRO_1000065476" description="Phosphatidylglycerol--prolipoprotein diacylglyceryl transferase">
    <location>
        <begin position="1"/>
        <end position="290"/>
    </location>
</feature>
<feature type="transmembrane region" description="Helical" evidence="1">
    <location>
        <begin position="21"/>
        <end position="41"/>
    </location>
</feature>
<feature type="transmembrane region" description="Helical" evidence="1">
    <location>
        <begin position="60"/>
        <end position="80"/>
    </location>
</feature>
<feature type="transmembrane region" description="Helical" evidence="1">
    <location>
        <begin position="96"/>
        <end position="116"/>
    </location>
</feature>
<feature type="transmembrane region" description="Helical" evidence="1">
    <location>
        <begin position="124"/>
        <end position="144"/>
    </location>
</feature>
<feature type="transmembrane region" description="Helical" evidence="1">
    <location>
        <begin position="198"/>
        <end position="218"/>
    </location>
</feature>
<feature type="transmembrane region" description="Helical" evidence="1">
    <location>
        <begin position="225"/>
        <end position="245"/>
    </location>
</feature>
<feature type="transmembrane region" description="Helical" evidence="1">
    <location>
        <begin position="260"/>
        <end position="280"/>
    </location>
</feature>
<feature type="binding site" evidence="1">
    <location>
        <position position="143"/>
    </location>
    <ligand>
        <name>a 1,2-diacyl-sn-glycero-3-phospho-(1'-sn-glycerol)</name>
        <dbReference type="ChEBI" id="CHEBI:64716"/>
    </ligand>
</feature>
<name>LGT_ENT38</name>